<feature type="chain" id="PRO_0000050492" description="Putative metabolite transport protein YfiG">
    <location>
        <begin position="1"/>
        <end position="482"/>
    </location>
</feature>
<feature type="topological domain" description="Cytoplasmic" evidence="1">
    <location>
        <begin position="1"/>
        <end position="29"/>
    </location>
</feature>
<feature type="transmembrane region" description="Helical; Name=1" evidence="1">
    <location>
        <begin position="30"/>
        <end position="50"/>
    </location>
</feature>
<feature type="topological domain" description="Extracellular" evidence="1">
    <location>
        <begin position="51"/>
        <end position="59"/>
    </location>
</feature>
<feature type="transmembrane region" description="Helical; Name=2" evidence="1">
    <location>
        <begin position="60"/>
        <end position="80"/>
    </location>
</feature>
<feature type="topological domain" description="Cytoplasmic" evidence="1">
    <location>
        <begin position="81"/>
        <end position="92"/>
    </location>
</feature>
<feature type="transmembrane region" description="Helical; Name=3" evidence="1">
    <location>
        <begin position="93"/>
        <end position="113"/>
    </location>
</feature>
<feature type="topological domain" description="Extracellular" evidence="1">
    <location>
        <begin position="114"/>
        <end position="120"/>
    </location>
</feature>
<feature type="transmembrane region" description="Helical; Name=4" evidence="1">
    <location>
        <begin position="121"/>
        <end position="141"/>
    </location>
</feature>
<feature type="topological domain" description="Cytoplasmic" evidence="1">
    <location>
        <begin position="142"/>
        <end position="155"/>
    </location>
</feature>
<feature type="transmembrane region" description="Helical; Name=5" evidence="1">
    <location>
        <begin position="156"/>
        <end position="176"/>
    </location>
</feature>
<feature type="topological domain" description="Extracellular" evidence="1">
    <location>
        <begin position="177"/>
        <end position="184"/>
    </location>
</feature>
<feature type="transmembrane region" description="Helical; Name=6" evidence="1">
    <location>
        <begin position="185"/>
        <end position="205"/>
    </location>
</feature>
<feature type="topological domain" description="Cytoplasmic" evidence="1">
    <location>
        <begin position="206"/>
        <end position="263"/>
    </location>
</feature>
<feature type="transmembrane region" description="Helical; Name=7" evidence="1">
    <location>
        <begin position="264"/>
        <end position="284"/>
    </location>
</feature>
<feature type="topological domain" description="Extracellular" evidence="1">
    <location>
        <begin position="285"/>
        <end position="301"/>
    </location>
</feature>
<feature type="transmembrane region" description="Helical; Name=8" evidence="1">
    <location>
        <begin position="302"/>
        <end position="322"/>
    </location>
</feature>
<feature type="topological domain" description="Cytoplasmic" evidence="1">
    <location>
        <begin position="323"/>
        <end position="331"/>
    </location>
</feature>
<feature type="transmembrane region" description="Helical; Name=9" evidence="1">
    <location>
        <begin position="332"/>
        <end position="352"/>
    </location>
</feature>
<feature type="transmembrane region" description="Helical; Name=10" evidence="1">
    <location>
        <begin position="353"/>
        <end position="373"/>
    </location>
</feature>
<feature type="topological domain" description="Cytoplasmic" evidence="1">
    <location>
        <begin position="374"/>
        <end position="400"/>
    </location>
</feature>
<feature type="transmembrane region" description="Helical; Name=11" evidence="1">
    <location>
        <begin position="401"/>
        <end position="421"/>
    </location>
</feature>
<feature type="topological domain" description="Extracellular" evidence="1">
    <location>
        <begin position="422"/>
        <end position="423"/>
    </location>
</feature>
<feature type="transmembrane region" description="Helical; Name=12" evidence="1">
    <location>
        <begin position="424"/>
        <end position="444"/>
    </location>
</feature>
<feature type="topological domain" description="Cytoplasmic" evidence="1">
    <location>
        <begin position="445"/>
        <end position="482"/>
    </location>
</feature>
<protein>
    <recommendedName>
        <fullName>Putative metabolite transport protein YfiG</fullName>
    </recommendedName>
</protein>
<organism>
    <name type="scientific">Bacillus subtilis (strain 168)</name>
    <dbReference type="NCBI Taxonomy" id="224308"/>
    <lineage>
        <taxon>Bacteria</taxon>
        <taxon>Bacillati</taxon>
        <taxon>Bacillota</taxon>
        <taxon>Bacilli</taxon>
        <taxon>Bacillales</taxon>
        <taxon>Bacillaceae</taxon>
        <taxon>Bacillus</taxon>
    </lineage>
</organism>
<proteinExistence type="inferred from homology"/>
<name>YFIG_BACSU</name>
<comment type="subcellular location">
    <subcellularLocation>
        <location evidence="2">Cell membrane</location>
        <topology evidence="2">Multi-pass membrane protein</topology>
    </subcellularLocation>
</comment>
<comment type="similarity">
    <text evidence="2">Belongs to the major facilitator superfamily. Sugar transporter (TC 2.A.1.1) family.</text>
</comment>
<evidence type="ECO:0000255" key="1"/>
<evidence type="ECO:0000305" key="2"/>
<dbReference type="EMBL" id="D50543">
    <property type="protein sequence ID" value="BAA09111.1"/>
    <property type="molecule type" value="Genomic_DNA"/>
</dbReference>
<dbReference type="EMBL" id="AL009126">
    <property type="protein sequence ID" value="CAB12655.1"/>
    <property type="molecule type" value="Genomic_DNA"/>
</dbReference>
<dbReference type="PIR" id="B69803">
    <property type="entry name" value="B69803"/>
</dbReference>
<dbReference type="RefSeq" id="NP_388707.1">
    <property type="nucleotide sequence ID" value="NC_000964.3"/>
</dbReference>
<dbReference type="RefSeq" id="WP_003244331.1">
    <property type="nucleotide sequence ID" value="NZ_OZ025638.1"/>
</dbReference>
<dbReference type="SMR" id="P54723"/>
<dbReference type="FunCoup" id="P54723">
    <property type="interactions" value="535"/>
</dbReference>
<dbReference type="STRING" id="224308.BSU08260"/>
<dbReference type="PaxDb" id="224308-BSU08260"/>
<dbReference type="EnsemblBacteria" id="CAB12655">
    <property type="protein sequence ID" value="CAB12655"/>
    <property type="gene ID" value="BSU_08260"/>
</dbReference>
<dbReference type="GeneID" id="939710"/>
<dbReference type="KEGG" id="bsu:BSU08260"/>
<dbReference type="PATRIC" id="fig|224308.43.peg.865"/>
<dbReference type="eggNOG" id="COG2814">
    <property type="taxonomic scope" value="Bacteria"/>
</dbReference>
<dbReference type="InParanoid" id="P54723"/>
<dbReference type="OrthoDB" id="9783823at2"/>
<dbReference type="PhylomeDB" id="P54723"/>
<dbReference type="BioCyc" id="BSUB:BSU08260-MONOMER"/>
<dbReference type="Proteomes" id="UP000001570">
    <property type="component" value="Chromosome"/>
</dbReference>
<dbReference type="GO" id="GO:0016020">
    <property type="term" value="C:membrane"/>
    <property type="evidence" value="ECO:0000318"/>
    <property type="project" value="GO_Central"/>
</dbReference>
<dbReference type="GO" id="GO:0005886">
    <property type="term" value="C:plasma membrane"/>
    <property type="evidence" value="ECO:0007669"/>
    <property type="project" value="UniProtKB-SubCell"/>
</dbReference>
<dbReference type="GO" id="GO:0055056">
    <property type="term" value="F:D-glucose transmembrane transporter activity"/>
    <property type="evidence" value="ECO:0000318"/>
    <property type="project" value="GO_Central"/>
</dbReference>
<dbReference type="GO" id="GO:1904659">
    <property type="term" value="P:D-glucose transmembrane transport"/>
    <property type="evidence" value="ECO:0000318"/>
    <property type="project" value="GO_Central"/>
</dbReference>
<dbReference type="CDD" id="cd17359">
    <property type="entry name" value="MFS_XylE_like"/>
    <property type="match status" value="1"/>
</dbReference>
<dbReference type="FunFam" id="1.20.1250.20:FF:000073">
    <property type="entry name" value="MFS myo-inositol transporter, putative"/>
    <property type="match status" value="1"/>
</dbReference>
<dbReference type="Gene3D" id="1.20.1250.20">
    <property type="entry name" value="MFS general substrate transporter like domains"/>
    <property type="match status" value="1"/>
</dbReference>
<dbReference type="InterPro" id="IPR020846">
    <property type="entry name" value="MFS_dom"/>
</dbReference>
<dbReference type="InterPro" id="IPR005828">
    <property type="entry name" value="MFS_sugar_transport-like"/>
</dbReference>
<dbReference type="InterPro" id="IPR050820">
    <property type="entry name" value="MFS_Sugar_Transporter"/>
</dbReference>
<dbReference type="InterPro" id="IPR036259">
    <property type="entry name" value="MFS_trans_sf"/>
</dbReference>
<dbReference type="InterPro" id="IPR003663">
    <property type="entry name" value="Sugar/inositol_transpt"/>
</dbReference>
<dbReference type="InterPro" id="IPR005829">
    <property type="entry name" value="Sugar_transporter_CS"/>
</dbReference>
<dbReference type="InterPro" id="IPR047984">
    <property type="entry name" value="XylE-like"/>
</dbReference>
<dbReference type="NCBIfam" id="TIGR00879">
    <property type="entry name" value="SP"/>
    <property type="match status" value="1"/>
</dbReference>
<dbReference type="PANTHER" id="PTHR48023">
    <property type="entry name" value="D-XYLOSE-PROTON SYMPORTER-LIKE 2"/>
    <property type="match status" value="1"/>
</dbReference>
<dbReference type="PANTHER" id="PTHR48023:SF4">
    <property type="entry name" value="D-XYLOSE-PROTON SYMPORTER-LIKE 2"/>
    <property type="match status" value="1"/>
</dbReference>
<dbReference type="Pfam" id="PF00083">
    <property type="entry name" value="Sugar_tr"/>
    <property type="match status" value="1"/>
</dbReference>
<dbReference type="PRINTS" id="PR00171">
    <property type="entry name" value="SUGRTRNSPORT"/>
</dbReference>
<dbReference type="SUPFAM" id="SSF103473">
    <property type="entry name" value="MFS general substrate transporter"/>
    <property type="match status" value="1"/>
</dbReference>
<dbReference type="PROSITE" id="PS50850">
    <property type="entry name" value="MFS"/>
    <property type="match status" value="1"/>
</dbReference>
<dbReference type="PROSITE" id="PS00217">
    <property type="entry name" value="SUGAR_TRANSPORT_2"/>
    <property type="match status" value="1"/>
</dbReference>
<keyword id="KW-1003">Cell membrane</keyword>
<keyword id="KW-0472">Membrane</keyword>
<keyword id="KW-1185">Reference proteome</keyword>
<keyword id="KW-0812">Transmembrane</keyword>
<keyword id="KW-1133">Transmembrane helix</keyword>
<keyword id="KW-0813">Transport</keyword>
<gene>
    <name type="primary">yfiG</name>
    <name type="ordered locus">BSU08260</name>
</gene>
<reference key="1">
    <citation type="journal article" date="1996" name="Microbiology">
        <title>Determination of a 12 kb nucleotide sequence around the 76 degrees region of the Bacillus subtilis chromosome.</title>
        <authorList>
            <person name="Yamamoto H."/>
            <person name="Uchiyama S."/>
            <person name="Fajar A.N."/>
            <person name="Ogasawara N."/>
            <person name="Sekiguchi J."/>
        </authorList>
    </citation>
    <scope>NUCLEOTIDE SEQUENCE [GENOMIC DNA]</scope>
    <source>
        <strain>168</strain>
    </source>
</reference>
<reference key="2">
    <citation type="journal article" date="1997" name="Nature">
        <title>The complete genome sequence of the Gram-positive bacterium Bacillus subtilis.</title>
        <authorList>
            <person name="Kunst F."/>
            <person name="Ogasawara N."/>
            <person name="Moszer I."/>
            <person name="Albertini A.M."/>
            <person name="Alloni G."/>
            <person name="Azevedo V."/>
            <person name="Bertero M.G."/>
            <person name="Bessieres P."/>
            <person name="Bolotin A."/>
            <person name="Borchert S."/>
            <person name="Borriss R."/>
            <person name="Boursier L."/>
            <person name="Brans A."/>
            <person name="Braun M."/>
            <person name="Brignell S.C."/>
            <person name="Bron S."/>
            <person name="Brouillet S."/>
            <person name="Bruschi C.V."/>
            <person name="Caldwell B."/>
            <person name="Capuano V."/>
            <person name="Carter N.M."/>
            <person name="Choi S.-K."/>
            <person name="Codani J.-J."/>
            <person name="Connerton I.F."/>
            <person name="Cummings N.J."/>
            <person name="Daniel R.A."/>
            <person name="Denizot F."/>
            <person name="Devine K.M."/>
            <person name="Duesterhoeft A."/>
            <person name="Ehrlich S.D."/>
            <person name="Emmerson P.T."/>
            <person name="Entian K.-D."/>
            <person name="Errington J."/>
            <person name="Fabret C."/>
            <person name="Ferrari E."/>
            <person name="Foulger D."/>
            <person name="Fritz C."/>
            <person name="Fujita M."/>
            <person name="Fujita Y."/>
            <person name="Fuma S."/>
            <person name="Galizzi A."/>
            <person name="Galleron N."/>
            <person name="Ghim S.-Y."/>
            <person name="Glaser P."/>
            <person name="Goffeau A."/>
            <person name="Golightly E.J."/>
            <person name="Grandi G."/>
            <person name="Guiseppi G."/>
            <person name="Guy B.J."/>
            <person name="Haga K."/>
            <person name="Haiech J."/>
            <person name="Harwood C.R."/>
            <person name="Henaut A."/>
            <person name="Hilbert H."/>
            <person name="Holsappel S."/>
            <person name="Hosono S."/>
            <person name="Hullo M.-F."/>
            <person name="Itaya M."/>
            <person name="Jones L.-M."/>
            <person name="Joris B."/>
            <person name="Karamata D."/>
            <person name="Kasahara Y."/>
            <person name="Klaerr-Blanchard M."/>
            <person name="Klein C."/>
            <person name="Kobayashi Y."/>
            <person name="Koetter P."/>
            <person name="Koningstein G."/>
            <person name="Krogh S."/>
            <person name="Kumano M."/>
            <person name="Kurita K."/>
            <person name="Lapidus A."/>
            <person name="Lardinois S."/>
            <person name="Lauber J."/>
            <person name="Lazarevic V."/>
            <person name="Lee S.-M."/>
            <person name="Levine A."/>
            <person name="Liu H."/>
            <person name="Masuda S."/>
            <person name="Mauel C."/>
            <person name="Medigue C."/>
            <person name="Medina N."/>
            <person name="Mellado R.P."/>
            <person name="Mizuno M."/>
            <person name="Moestl D."/>
            <person name="Nakai S."/>
            <person name="Noback M."/>
            <person name="Noone D."/>
            <person name="O'Reilly M."/>
            <person name="Ogawa K."/>
            <person name="Ogiwara A."/>
            <person name="Oudega B."/>
            <person name="Park S.-H."/>
            <person name="Parro V."/>
            <person name="Pohl T.M."/>
            <person name="Portetelle D."/>
            <person name="Porwollik S."/>
            <person name="Prescott A.M."/>
            <person name="Presecan E."/>
            <person name="Pujic P."/>
            <person name="Purnelle B."/>
            <person name="Rapoport G."/>
            <person name="Rey M."/>
            <person name="Reynolds S."/>
            <person name="Rieger M."/>
            <person name="Rivolta C."/>
            <person name="Rocha E."/>
            <person name="Roche B."/>
            <person name="Rose M."/>
            <person name="Sadaie Y."/>
            <person name="Sato T."/>
            <person name="Scanlan E."/>
            <person name="Schleich S."/>
            <person name="Schroeter R."/>
            <person name="Scoffone F."/>
            <person name="Sekiguchi J."/>
            <person name="Sekowska A."/>
            <person name="Seror S.J."/>
            <person name="Serror P."/>
            <person name="Shin B.-S."/>
            <person name="Soldo B."/>
            <person name="Sorokin A."/>
            <person name="Tacconi E."/>
            <person name="Takagi T."/>
            <person name="Takahashi H."/>
            <person name="Takemaru K."/>
            <person name="Takeuchi M."/>
            <person name="Tamakoshi A."/>
            <person name="Tanaka T."/>
            <person name="Terpstra P."/>
            <person name="Tognoni A."/>
            <person name="Tosato V."/>
            <person name="Uchiyama S."/>
            <person name="Vandenbol M."/>
            <person name="Vannier F."/>
            <person name="Vassarotti A."/>
            <person name="Viari A."/>
            <person name="Wambutt R."/>
            <person name="Wedler E."/>
            <person name="Wedler H."/>
            <person name="Weitzenegger T."/>
            <person name="Winters P."/>
            <person name="Wipat A."/>
            <person name="Yamamoto H."/>
            <person name="Yamane K."/>
            <person name="Yasumoto K."/>
            <person name="Yata K."/>
            <person name="Yoshida K."/>
            <person name="Yoshikawa H.-F."/>
            <person name="Zumstein E."/>
            <person name="Yoshikawa H."/>
            <person name="Danchin A."/>
        </authorList>
    </citation>
    <scope>NUCLEOTIDE SEQUENCE [LARGE SCALE GENOMIC DNA]</scope>
    <source>
        <strain>168</strain>
    </source>
</reference>
<accession>P54723</accession>
<sequence length="482" mass="52757">MSTKKKEAVIGKESLAHKGLLRTITLVSTFGGLLFGYDTGVINGALPFMATAGQLNLTPVTEGLVASSLLLGAAFGAMFGGRLSDRHGRRKTILYLALLFIAATLGCTFSPNASVMIAFRFLLGLAVGCASVTVPTFLAEISPAERRGRIVTQNELMIVIGQLLAYTFNAIIGSTMGESANVWRYMLVIATLPAVVLWFGMLIVPESPRWLAAKGRMGDALRVLRQIREDSQAQQEIKEIKHAIEGTAKKAGFHDFQEPWIRRILFIGIGIAIVQQITGVNSIMYYGTEILREAGFQTEAALIGNIANGVISVIAVIFGIWLLGKVRRRPMLIIGQIGTMTALLLIGILSIVLEGTPALPYVVLSLTILFLAFQQTAISTVTWLMLSEIFPMHVRGLGMGISTFCLWTANFLIGFTFPILLNHIGMSATFFIFVAMNILAILFVKKYVPETKGRSLEQLEHSFRQYGRRADQEIQNQTTHLS</sequence>